<comment type="function">
    <text evidence="1">Part of the phosphoribosylformylglycinamidine synthase complex involved in the purines biosynthetic pathway. Catalyzes the ATP-dependent conversion of formylglycinamide ribonucleotide (FGAR) and glutamine to yield formylglycinamidine ribonucleotide (FGAM) and glutamate. The FGAM synthase complex is composed of three subunits. PurQ produces an ammonia molecule by converting glutamine to glutamate. PurL transfers the ammonia molecule to FGAR to form FGAM in an ATP-dependent manner. PurS interacts with PurQ and PurL and is thought to assist in the transfer of the ammonia molecule from PurQ to PurL.</text>
</comment>
<comment type="catalytic activity">
    <reaction evidence="1">
        <text>N(2)-formyl-N(1)-(5-phospho-beta-D-ribosyl)glycinamide + L-glutamine + ATP + H2O = 2-formamido-N(1)-(5-O-phospho-beta-D-ribosyl)acetamidine + L-glutamate + ADP + phosphate + H(+)</text>
        <dbReference type="Rhea" id="RHEA:17129"/>
        <dbReference type="ChEBI" id="CHEBI:15377"/>
        <dbReference type="ChEBI" id="CHEBI:15378"/>
        <dbReference type="ChEBI" id="CHEBI:29985"/>
        <dbReference type="ChEBI" id="CHEBI:30616"/>
        <dbReference type="ChEBI" id="CHEBI:43474"/>
        <dbReference type="ChEBI" id="CHEBI:58359"/>
        <dbReference type="ChEBI" id="CHEBI:147286"/>
        <dbReference type="ChEBI" id="CHEBI:147287"/>
        <dbReference type="ChEBI" id="CHEBI:456216"/>
        <dbReference type="EC" id="6.3.5.3"/>
    </reaction>
</comment>
<comment type="pathway">
    <text evidence="1">Purine metabolism; IMP biosynthesis via de novo pathway; 5-amino-1-(5-phospho-D-ribosyl)imidazole from N(2)-formyl-N(1)-(5-phospho-D-ribosyl)glycinamide: step 1/2.</text>
</comment>
<comment type="subunit">
    <text evidence="1">Monomer. Part of the FGAM synthase complex composed of 1 PurL, 1 PurQ and 2 PurS subunits.</text>
</comment>
<comment type="subcellular location">
    <subcellularLocation>
        <location evidence="1">Cytoplasm</location>
    </subcellularLocation>
</comment>
<comment type="similarity">
    <text evidence="1">Belongs to the FGAMS family.</text>
</comment>
<sequence length="705" mass="77867">MLPREEKIIRERLGREPNEVEKAMLEVMWSEHVSYKSSRKWLKLLPTKNEHVILGPGEDAGVVKFDESTWIVIGIESHNHPSAVEPYGGAATGIGGIVRDILCMGARPIALLDPIRFGPLEKEKNRYLFEYVVKGIADYGNRIGVPTVGGETEFDESLDNYTLVNVVCVGIMKPEHLVHSYVTKPGLKLVLVGNRTGRDGIHGVTFASEELSENAEEEDRSAVQIPDPFTEKLLIEATLEAVYTGKVKALKDLGGGGLTCAASEMAGKKGLGAVIYADRVPLREPGMTPLEVMISESQERMLFAVEPEDVEELAKIFEKYELEWAVVGEIIEEPRFVVYWKGDKVADLPIELLTNVPTIEWPMKEYKLEEDVETPDIALSKAFDLVWSSPNIVAKRWVWEQYDHEVQGRTVVKPGFDAAVLKINGEYGLAITSDGNPSYCYLNPYHGAMGTVAEVVRNLVSVGAKPLALVDNLNFASPERPEVYWSFVETVKGLADAAKAFDLAYVSGNVSFYNEVVDRPVKPTPVVAGIGKVKLKDIPRGPRDGDVIALIGSTRRELGGSELYRVLGIKGGIAPRVNLEEEKGNALAILNLIENDLVTFVHDVSRGGVAVALAELSAWFNVGVKAKFTSSFKSIDFAFSESHGRYIITLPEDKVEEAKEIAKISIVGRVGGDNFALEVNGEKVEKDIEELSRIYWNYMYDLLEL</sequence>
<feature type="chain" id="PRO_0000100519" description="Phosphoribosylformylglycinamidine synthase subunit PurL">
    <location>
        <begin position="1"/>
        <end position="705"/>
    </location>
</feature>
<feature type="active site" evidence="1">
    <location>
        <position position="32"/>
    </location>
</feature>
<feature type="active site" description="Proton acceptor" evidence="1">
    <location>
        <position position="78"/>
    </location>
</feature>
<feature type="binding site" evidence="1">
    <location>
        <position position="35"/>
    </location>
    <ligand>
        <name>ATP</name>
        <dbReference type="ChEBI" id="CHEBI:30616"/>
    </ligand>
</feature>
<feature type="binding site" evidence="1">
    <location>
        <position position="76"/>
    </location>
    <ligand>
        <name>Mg(2+)</name>
        <dbReference type="ChEBI" id="CHEBI:18420"/>
        <label>1</label>
    </ligand>
</feature>
<feature type="binding site" evidence="1">
    <location>
        <begin position="77"/>
        <end position="80"/>
    </location>
    <ligand>
        <name>substrate</name>
    </ligand>
</feature>
<feature type="binding site" evidence="1">
    <location>
        <position position="99"/>
    </location>
    <ligand>
        <name>substrate</name>
    </ligand>
</feature>
<feature type="binding site" evidence="1">
    <location>
        <position position="100"/>
    </location>
    <ligand>
        <name>Mg(2+)</name>
        <dbReference type="ChEBI" id="CHEBI:18420"/>
        <label>2</label>
    </ligand>
</feature>
<feature type="binding site" evidence="1">
    <location>
        <position position="224"/>
    </location>
    <ligand>
        <name>substrate</name>
    </ligand>
</feature>
<feature type="binding site" evidence="1">
    <location>
        <position position="252"/>
    </location>
    <ligand>
        <name>Mg(2+)</name>
        <dbReference type="ChEBI" id="CHEBI:18420"/>
        <label>2</label>
    </ligand>
</feature>
<feature type="binding site" evidence="1">
    <location>
        <begin position="296"/>
        <end position="298"/>
    </location>
    <ligand>
        <name>substrate</name>
    </ligand>
</feature>
<feature type="binding site" evidence="1">
    <location>
        <position position="471"/>
    </location>
    <ligand>
        <name>ATP</name>
        <dbReference type="ChEBI" id="CHEBI:30616"/>
    </ligand>
</feature>
<feature type="binding site" evidence="1">
    <location>
        <position position="508"/>
    </location>
    <ligand>
        <name>ATP</name>
        <dbReference type="ChEBI" id="CHEBI:30616"/>
    </ligand>
</feature>
<feature type="binding site" evidence="1">
    <location>
        <position position="509"/>
    </location>
    <ligand>
        <name>Mg(2+)</name>
        <dbReference type="ChEBI" id="CHEBI:18420"/>
        <label>1</label>
    </ligand>
</feature>
<feature type="binding site" evidence="1">
    <location>
        <position position="511"/>
    </location>
    <ligand>
        <name>substrate</name>
    </ligand>
</feature>
<accession>Q9UXW6</accession>
<accession>G8ZKS4</accession>
<evidence type="ECO:0000255" key="1">
    <source>
        <dbReference type="HAMAP-Rule" id="MF_00420"/>
    </source>
</evidence>
<dbReference type="EC" id="6.3.5.3" evidence="1"/>
<dbReference type="EMBL" id="AJ248288">
    <property type="protein sequence ID" value="CAB50647.1"/>
    <property type="molecule type" value="Genomic_DNA"/>
</dbReference>
<dbReference type="EMBL" id="HE613800">
    <property type="protein sequence ID" value="CCE71215.1"/>
    <property type="molecule type" value="Genomic_DNA"/>
</dbReference>
<dbReference type="PIR" id="A75026">
    <property type="entry name" value="A75026"/>
</dbReference>
<dbReference type="RefSeq" id="WP_010868861.1">
    <property type="nucleotide sequence ID" value="NC_000868.1"/>
</dbReference>
<dbReference type="SMR" id="Q9UXW6"/>
<dbReference type="STRING" id="272844.PAB1201"/>
<dbReference type="KEGG" id="pab:PAB1201"/>
<dbReference type="PATRIC" id="fig|272844.11.peg.1860"/>
<dbReference type="eggNOG" id="arCOG00641">
    <property type="taxonomic scope" value="Archaea"/>
</dbReference>
<dbReference type="HOGENOM" id="CLU_003100_0_1_2"/>
<dbReference type="OrthoDB" id="8251at2157"/>
<dbReference type="PhylomeDB" id="Q9UXW6"/>
<dbReference type="UniPathway" id="UPA00074">
    <property type="reaction ID" value="UER00128"/>
</dbReference>
<dbReference type="Proteomes" id="UP000000810">
    <property type="component" value="Chromosome"/>
</dbReference>
<dbReference type="Proteomes" id="UP000009139">
    <property type="component" value="Chromosome"/>
</dbReference>
<dbReference type="GO" id="GO:0005737">
    <property type="term" value="C:cytoplasm"/>
    <property type="evidence" value="ECO:0007669"/>
    <property type="project" value="UniProtKB-SubCell"/>
</dbReference>
<dbReference type="GO" id="GO:0005524">
    <property type="term" value="F:ATP binding"/>
    <property type="evidence" value="ECO:0007669"/>
    <property type="project" value="UniProtKB-UniRule"/>
</dbReference>
<dbReference type="GO" id="GO:0000287">
    <property type="term" value="F:magnesium ion binding"/>
    <property type="evidence" value="ECO:0007669"/>
    <property type="project" value="UniProtKB-UniRule"/>
</dbReference>
<dbReference type="GO" id="GO:0004642">
    <property type="term" value="F:phosphoribosylformylglycinamidine synthase activity"/>
    <property type="evidence" value="ECO:0007669"/>
    <property type="project" value="UniProtKB-UniRule"/>
</dbReference>
<dbReference type="GO" id="GO:0006189">
    <property type="term" value="P:'de novo' IMP biosynthetic process"/>
    <property type="evidence" value="ECO:0007669"/>
    <property type="project" value="UniProtKB-UniRule"/>
</dbReference>
<dbReference type="CDD" id="cd02203">
    <property type="entry name" value="PurL_repeat1"/>
    <property type="match status" value="1"/>
</dbReference>
<dbReference type="CDD" id="cd02204">
    <property type="entry name" value="PurL_repeat2"/>
    <property type="match status" value="1"/>
</dbReference>
<dbReference type="Gene3D" id="3.90.650.10">
    <property type="entry name" value="PurM-like C-terminal domain"/>
    <property type="match status" value="2"/>
</dbReference>
<dbReference type="Gene3D" id="3.30.1330.10">
    <property type="entry name" value="PurM-like, N-terminal domain"/>
    <property type="match status" value="2"/>
</dbReference>
<dbReference type="HAMAP" id="MF_00420">
    <property type="entry name" value="PurL_2"/>
    <property type="match status" value="1"/>
</dbReference>
<dbReference type="InterPro" id="IPR010074">
    <property type="entry name" value="PRibForGlyAmidine_synth_PurL"/>
</dbReference>
<dbReference type="InterPro" id="IPR041609">
    <property type="entry name" value="PurL_linker"/>
</dbReference>
<dbReference type="InterPro" id="IPR010918">
    <property type="entry name" value="PurM-like_C_dom"/>
</dbReference>
<dbReference type="InterPro" id="IPR036676">
    <property type="entry name" value="PurM-like_C_sf"/>
</dbReference>
<dbReference type="InterPro" id="IPR016188">
    <property type="entry name" value="PurM-like_N"/>
</dbReference>
<dbReference type="InterPro" id="IPR036921">
    <property type="entry name" value="PurM-like_N_sf"/>
</dbReference>
<dbReference type="NCBIfam" id="TIGR01736">
    <property type="entry name" value="FGAM_synth_II"/>
    <property type="match status" value="1"/>
</dbReference>
<dbReference type="NCBIfam" id="NF002290">
    <property type="entry name" value="PRK01213.1"/>
    <property type="match status" value="1"/>
</dbReference>
<dbReference type="PANTHER" id="PTHR43555">
    <property type="entry name" value="PHOSPHORIBOSYLFORMYLGLYCINAMIDINE SYNTHASE SUBUNIT PURL"/>
    <property type="match status" value="1"/>
</dbReference>
<dbReference type="PANTHER" id="PTHR43555:SF1">
    <property type="entry name" value="PHOSPHORIBOSYLFORMYLGLYCINAMIDINE SYNTHASE SUBUNIT PURL"/>
    <property type="match status" value="1"/>
</dbReference>
<dbReference type="Pfam" id="PF00586">
    <property type="entry name" value="AIRS"/>
    <property type="match status" value="2"/>
</dbReference>
<dbReference type="Pfam" id="PF02769">
    <property type="entry name" value="AIRS_C"/>
    <property type="match status" value="2"/>
</dbReference>
<dbReference type="Pfam" id="PF18072">
    <property type="entry name" value="FGAR-AT_linker"/>
    <property type="match status" value="1"/>
</dbReference>
<dbReference type="PIRSF" id="PIRSF001587">
    <property type="entry name" value="FGAM_synthase_II"/>
    <property type="match status" value="1"/>
</dbReference>
<dbReference type="SUPFAM" id="SSF56042">
    <property type="entry name" value="PurM C-terminal domain-like"/>
    <property type="match status" value="2"/>
</dbReference>
<dbReference type="SUPFAM" id="SSF55326">
    <property type="entry name" value="PurM N-terminal domain-like"/>
    <property type="match status" value="2"/>
</dbReference>
<reference key="1">
    <citation type="journal article" date="2003" name="Mol. Microbiol.">
        <title>An integrated analysis of the genome of the hyperthermophilic archaeon Pyrococcus abyssi.</title>
        <authorList>
            <person name="Cohen G.N."/>
            <person name="Barbe V."/>
            <person name="Flament D."/>
            <person name="Galperin M."/>
            <person name="Heilig R."/>
            <person name="Lecompte O."/>
            <person name="Poch O."/>
            <person name="Prieur D."/>
            <person name="Querellou J."/>
            <person name="Ripp R."/>
            <person name="Thierry J.-C."/>
            <person name="Van der Oost J."/>
            <person name="Weissenbach J."/>
            <person name="Zivanovic Y."/>
            <person name="Forterre P."/>
        </authorList>
    </citation>
    <scope>NUCLEOTIDE SEQUENCE [LARGE SCALE GENOMIC DNA]</scope>
    <source>
        <strain>GE5 / Orsay</strain>
    </source>
</reference>
<reference key="2">
    <citation type="journal article" date="2012" name="Curr. Microbiol.">
        <title>Re-annotation of two hyperthermophilic archaea Pyrococcus abyssi GE5 and Pyrococcus furiosus DSM 3638.</title>
        <authorList>
            <person name="Gao J."/>
            <person name="Wang J."/>
        </authorList>
    </citation>
    <scope>GENOME REANNOTATION</scope>
    <source>
        <strain>GE5 / Orsay</strain>
    </source>
</reference>
<proteinExistence type="inferred from homology"/>
<gene>
    <name evidence="1" type="primary">purL</name>
    <name type="ordered locus">PYRAB17420</name>
    <name type="ORF">PAB1201</name>
</gene>
<organism>
    <name type="scientific">Pyrococcus abyssi (strain GE5 / Orsay)</name>
    <dbReference type="NCBI Taxonomy" id="272844"/>
    <lineage>
        <taxon>Archaea</taxon>
        <taxon>Methanobacteriati</taxon>
        <taxon>Methanobacteriota</taxon>
        <taxon>Thermococci</taxon>
        <taxon>Thermococcales</taxon>
        <taxon>Thermococcaceae</taxon>
        <taxon>Pyrococcus</taxon>
    </lineage>
</organism>
<keyword id="KW-0067">ATP-binding</keyword>
<keyword id="KW-0963">Cytoplasm</keyword>
<keyword id="KW-0436">Ligase</keyword>
<keyword id="KW-0460">Magnesium</keyword>
<keyword id="KW-0479">Metal-binding</keyword>
<keyword id="KW-0547">Nucleotide-binding</keyword>
<keyword id="KW-0658">Purine biosynthesis</keyword>
<name>PURL_PYRAB</name>
<protein>
    <recommendedName>
        <fullName evidence="1">Phosphoribosylformylglycinamidine synthase subunit PurL</fullName>
        <shortName evidence="1">FGAM synthase</shortName>
        <ecNumber evidence="1">6.3.5.3</ecNumber>
    </recommendedName>
    <alternativeName>
        <fullName evidence="1">Formylglycinamide ribonucleotide amidotransferase subunit II</fullName>
        <shortName evidence="1">FGAR amidotransferase II</shortName>
        <shortName evidence="1">FGAR-AT II</shortName>
    </alternativeName>
    <alternativeName>
        <fullName evidence="1">Glutamine amidotransferase PurL</fullName>
    </alternativeName>
    <alternativeName>
        <fullName evidence="1">Phosphoribosylformylglycinamidine synthase subunit II</fullName>
    </alternativeName>
</protein>